<keyword id="KW-0238">DNA-binding</keyword>
<keyword id="KW-0678">Repressor</keyword>
<keyword id="KW-0804">Transcription</keyword>
<keyword id="KW-0805">Transcription regulation</keyword>
<protein>
    <recommendedName>
        <fullName evidence="1">HTH-type transcriptional regulator HdfR</fullName>
    </recommendedName>
    <alternativeName>
        <fullName evidence="1">H-NS-dependent flhDC regulator</fullName>
    </alternativeName>
</protein>
<gene>
    <name evidence="1" type="primary">hdfR</name>
    <name type="ordered locus">SeAg_B4123</name>
</gene>
<name>HDFR_SALA4</name>
<comment type="function">
    <text evidence="1">Negatively regulates the transcription of the flagellar master operon flhDC by binding to the upstream region of the operon.</text>
</comment>
<comment type="similarity">
    <text evidence="2">Belongs to the LysR transcriptional regulatory family.</text>
</comment>
<evidence type="ECO:0000255" key="1">
    <source>
        <dbReference type="HAMAP-Rule" id="MF_01233"/>
    </source>
</evidence>
<evidence type="ECO:0000305" key="2"/>
<reference key="1">
    <citation type="journal article" date="2011" name="J. Bacteriol.">
        <title>Comparative genomics of 28 Salmonella enterica isolates: evidence for CRISPR-mediated adaptive sublineage evolution.</title>
        <authorList>
            <person name="Fricke W.F."/>
            <person name="Mammel M.K."/>
            <person name="McDermott P.F."/>
            <person name="Tartera C."/>
            <person name="White D.G."/>
            <person name="Leclerc J.E."/>
            <person name="Ravel J."/>
            <person name="Cebula T.A."/>
        </authorList>
    </citation>
    <scope>NUCLEOTIDE SEQUENCE [LARGE SCALE GENOMIC DNA]</scope>
    <source>
        <strain>SL483</strain>
    </source>
</reference>
<proteinExistence type="inferred from homology"/>
<dbReference type="EMBL" id="CP001138">
    <property type="protein sequence ID" value="ACH52407.1"/>
    <property type="molecule type" value="Genomic_DNA"/>
</dbReference>
<dbReference type="SMR" id="B5EZ22"/>
<dbReference type="KEGG" id="sea:SeAg_B4123"/>
<dbReference type="HOGENOM" id="CLU_039613_8_2_6"/>
<dbReference type="Proteomes" id="UP000008819">
    <property type="component" value="Chromosome"/>
</dbReference>
<dbReference type="GO" id="GO:0003677">
    <property type="term" value="F:DNA binding"/>
    <property type="evidence" value="ECO:0007669"/>
    <property type="project" value="UniProtKB-KW"/>
</dbReference>
<dbReference type="GO" id="GO:0003700">
    <property type="term" value="F:DNA-binding transcription factor activity"/>
    <property type="evidence" value="ECO:0007669"/>
    <property type="project" value="UniProtKB-UniRule"/>
</dbReference>
<dbReference type="GO" id="GO:0045892">
    <property type="term" value="P:negative regulation of DNA-templated transcription"/>
    <property type="evidence" value="ECO:0007669"/>
    <property type="project" value="UniProtKB-UniRule"/>
</dbReference>
<dbReference type="FunFam" id="1.10.10.10:FF:000001">
    <property type="entry name" value="LysR family transcriptional regulator"/>
    <property type="match status" value="1"/>
</dbReference>
<dbReference type="Gene3D" id="1.10.10.10">
    <property type="entry name" value="Winged helix-like DNA-binding domain superfamily/Winged helix DNA-binding domain"/>
    <property type="match status" value="1"/>
</dbReference>
<dbReference type="HAMAP" id="MF_01233">
    <property type="entry name" value="HTH_type_HdfR"/>
    <property type="match status" value="1"/>
</dbReference>
<dbReference type="InterPro" id="IPR050176">
    <property type="entry name" value="LTTR"/>
</dbReference>
<dbReference type="InterPro" id="IPR005119">
    <property type="entry name" value="LysR_subst-bd"/>
</dbReference>
<dbReference type="InterPro" id="IPR020890">
    <property type="entry name" value="Tscrpt_reg_HTH_HdfR"/>
</dbReference>
<dbReference type="InterPro" id="IPR000847">
    <property type="entry name" value="Tscrpt_reg_HTH_LysR"/>
</dbReference>
<dbReference type="InterPro" id="IPR036388">
    <property type="entry name" value="WH-like_DNA-bd_sf"/>
</dbReference>
<dbReference type="InterPro" id="IPR036390">
    <property type="entry name" value="WH_DNA-bd_sf"/>
</dbReference>
<dbReference type="NCBIfam" id="NF002946">
    <property type="entry name" value="PRK03601.1"/>
    <property type="match status" value="1"/>
</dbReference>
<dbReference type="PANTHER" id="PTHR30579:SF8">
    <property type="entry name" value="HTH-TYPE TRANSCRIPTIONAL REGULATOR HDFR"/>
    <property type="match status" value="1"/>
</dbReference>
<dbReference type="PANTHER" id="PTHR30579">
    <property type="entry name" value="TRANSCRIPTIONAL REGULATOR"/>
    <property type="match status" value="1"/>
</dbReference>
<dbReference type="Pfam" id="PF00126">
    <property type="entry name" value="HTH_1"/>
    <property type="match status" value="1"/>
</dbReference>
<dbReference type="Pfam" id="PF03466">
    <property type="entry name" value="LysR_substrate"/>
    <property type="match status" value="1"/>
</dbReference>
<dbReference type="PRINTS" id="PR00039">
    <property type="entry name" value="HTHLYSR"/>
</dbReference>
<dbReference type="SUPFAM" id="SSF53850">
    <property type="entry name" value="Periplasmic binding protein-like II"/>
    <property type="match status" value="1"/>
</dbReference>
<dbReference type="SUPFAM" id="SSF46785">
    <property type="entry name" value="Winged helix' DNA-binding domain"/>
    <property type="match status" value="1"/>
</dbReference>
<dbReference type="PROSITE" id="PS50931">
    <property type="entry name" value="HTH_LYSR"/>
    <property type="match status" value="1"/>
</dbReference>
<organism>
    <name type="scientific">Salmonella agona (strain SL483)</name>
    <dbReference type="NCBI Taxonomy" id="454166"/>
    <lineage>
        <taxon>Bacteria</taxon>
        <taxon>Pseudomonadati</taxon>
        <taxon>Pseudomonadota</taxon>
        <taxon>Gammaproteobacteria</taxon>
        <taxon>Enterobacterales</taxon>
        <taxon>Enterobacteriaceae</taxon>
        <taxon>Salmonella</taxon>
    </lineage>
</organism>
<feature type="chain" id="PRO_1000139671" description="HTH-type transcriptional regulator HdfR">
    <location>
        <begin position="1"/>
        <end position="278"/>
    </location>
</feature>
<feature type="domain" description="HTH lysR-type" evidence="1">
    <location>
        <begin position="1"/>
        <end position="58"/>
    </location>
</feature>
<feature type="DNA-binding region" description="H-T-H motif" evidence="1">
    <location>
        <begin position="18"/>
        <end position="37"/>
    </location>
</feature>
<sequence length="278" mass="31604">MDTELLKTFLEVSRTRHFGRAAEALYLTQSAVSFRIRQLENQLGVNLFTRHRNNIRLTTAGEKLLPYAETLMNTWQAARKEVAHTSRHNEFSIGASASLWECMLNAWLGRLYQLQEPQSGLQFEARIAQRQSLVKQLHERQLDLLITTEAPKMDEFSSQLLGHFTLALYCSSPARKKSELNYLRLEWGPDFQQHETGLIAADEVPVLTTSSAELARQQLSALNGCSWLPVNWANEKGGLHTVADSATLSRPLYAIWLQNSDKYSLICDLLKTDVLDEQ</sequence>
<accession>B5EZ22</accession>